<sequence>MSNMYCGIGKVPKGKERGTPEHCFQSNQIRYYGIKKIDKSLLEKPKKKRLSLIKEQTKLNNLLEKGKRMVKEANKLKSIINDPESSKTEIRNAKKKLEKIVAKKNKFVLELKQQRQVVDELLEEEREKEKAERKAEKAKKNKKKSSTKTKKK</sequence>
<keyword id="KW-1185">Reference proteome</keyword>
<comment type="similarity">
    <text evidence="2">Belongs to the mimivirus R546 family.</text>
</comment>
<name>VF546_SPTNK</name>
<feature type="chain" id="PRO_0000369820" description="Uncharacterized protein V12">
    <location>
        <begin position="1"/>
        <end position="152"/>
    </location>
</feature>
<feature type="region of interest" description="Disordered" evidence="1">
    <location>
        <begin position="127"/>
        <end position="152"/>
    </location>
</feature>
<feature type="compositionally biased region" description="Basic residues" evidence="1">
    <location>
        <begin position="136"/>
        <end position="152"/>
    </location>
</feature>
<proteinExistence type="inferred from homology"/>
<reference key="1">
    <citation type="journal article" date="2008" name="Nature">
        <title>The virophage as a unique parasite of the giant mimivirus.</title>
        <authorList>
            <person name="La Scola B."/>
            <person name="Desnues C."/>
            <person name="Pagnier I."/>
            <person name="Robert C."/>
            <person name="Barrassi L."/>
            <person name="Fournous G."/>
            <person name="Merchat M."/>
            <person name="Suzan-Monti M."/>
            <person name="Forterre P."/>
            <person name="Koonin E."/>
            <person name="Raoult D."/>
        </authorList>
    </citation>
    <scope>NUCLEOTIDE SEQUENCE [GENOMIC DNA]</scope>
</reference>
<evidence type="ECO:0000256" key="1">
    <source>
        <dbReference type="SAM" id="MobiDB-lite"/>
    </source>
</evidence>
<evidence type="ECO:0000305" key="2"/>
<dbReference type="EMBL" id="EU606015">
    <property type="protein sequence ID" value="ACF16996.1"/>
    <property type="molecule type" value="Genomic_DNA"/>
</dbReference>
<dbReference type="RefSeq" id="YP_002122373.1">
    <property type="nucleotide sequence ID" value="NC_011132.1"/>
</dbReference>
<dbReference type="SMR" id="B4YNF2"/>
<dbReference type="GeneID" id="6760343"/>
<dbReference type="KEGG" id="vg:6760343"/>
<dbReference type="OrthoDB" id="25528at10239"/>
<dbReference type="Proteomes" id="UP000001863">
    <property type="component" value="Segment"/>
</dbReference>
<protein>
    <recommendedName>
        <fullName>Uncharacterized protein V12</fullName>
    </recommendedName>
</protein>
<organism>
    <name type="scientific">Sputnik virophage</name>
    <dbReference type="NCBI Taxonomy" id="543939"/>
    <lineage>
        <taxon>Viruses</taxon>
        <taxon>Varidnaviria</taxon>
        <taxon>Bamfordvirae</taxon>
        <taxon>Preplasmiviricota</taxon>
        <taxon>Maveriviricetes</taxon>
        <taxon>Priklausovirales</taxon>
        <taxon>Lavidaviridae</taxon>
        <taxon>Sputnikvirus</taxon>
        <taxon>Mimivirus-dependent virus Sputnik</taxon>
    </lineage>
</organism>
<accession>B4YNF2</accession>
<organismHost>
    <name type="scientific">Acanthamoeba polyphaga</name>
    <name type="common">Amoeba</name>
    <dbReference type="NCBI Taxonomy" id="5757"/>
</organismHost>